<gene>
    <name evidence="1" type="primary">xseA</name>
    <name type="ordered locus">lhv_1414</name>
</gene>
<dbReference type="EC" id="3.1.11.6" evidence="1"/>
<dbReference type="EMBL" id="CP000517">
    <property type="protein sequence ID" value="ABX27399.1"/>
    <property type="molecule type" value="Genomic_DNA"/>
</dbReference>
<dbReference type="RefSeq" id="WP_012212032.1">
    <property type="nucleotide sequence ID" value="NC_010080.1"/>
</dbReference>
<dbReference type="SMR" id="A8YVW9"/>
<dbReference type="KEGG" id="lhe:lhv_1414"/>
<dbReference type="eggNOG" id="COG1570">
    <property type="taxonomic scope" value="Bacteria"/>
</dbReference>
<dbReference type="HOGENOM" id="CLU_023625_3_1_9"/>
<dbReference type="Proteomes" id="UP000000790">
    <property type="component" value="Chromosome"/>
</dbReference>
<dbReference type="GO" id="GO:0005737">
    <property type="term" value="C:cytoplasm"/>
    <property type="evidence" value="ECO:0007669"/>
    <property type="project" value="UniProtKB-SubCell"/>
</dbReference>
<dbReference type="GO" id="GO:0009318">
    <property type="term" value="C:exodeoxyribonuclease VII complex"/>
    <property type="evidence" value="ECO:0007669"/>
    <property type="project" value="InterPro"/>
</dbReference>
<dbReference type="GO" id="GO:0008855">
    <property type="term" value="F:exodeoxyribonuclease VII activity"/>
    <property type="evidence" value="ECO:0007669"/>
    <property type="project" value="UniProtKB-UniRule"/>
</dbReference>
<dbReference type="GO" id="GO:0003676">
    <property type="term" value="F:nucleic acid binding"/>
    <property type="evidence" value="ECO:0007669"/>
    <property type="project" value="InterPro"/>
</dbReference>
<dbReference type="GO" id="GO:0006308">
    <property type="term" value="P:DNA catabolic process"/>
    <property type="evidence" value="ECO:0007669"/>
    <property type="project" value="UniProtKB-UniRule"/>
</dbReference>
<dbReference type="CDD" id="cd04489">
    <property type="entry name" value="ExoVII_LU_OBF"/>
    <property type="match status" value="1"/>
</dbReference>
<dbReference type="HAMAP" id="MF_00378">
    <property type="entry name" value="Exonuc_7_L"/>
    <property type="match status" value="1"/>
</dbReference>
<dbReference type="InterPro" id="IPR003753">
    <property type="entry name" value="Exonuc_VII_L"/>
</dbReference>
<dbReference type="InterPro" id="IPR020579">
    <property type="entry name" value="Exonuc_VII_lsu_C"/>
</dbReference>
<dbReference type="InterPro" id="IPR025824">
    <property type="entry name" value="OB-fold_nuc-bd_dom"/>
</dbReference>
<dbReference type="NCBIfam" id="TIGR00237">
    <property type="entry name" value="xseA"/>
    <property type="match status" value="1"/>
</dbReference>
<dbReference type="PANTHER" id="PTHR30008">
    <property type="entry name" value="EXODEOXYRIBONUCLEASE 7 LARGE SUBUNIT"/>
    <property type="match status" value="1"/>
</dbReference>
<dbReference type="PANTHER" id="PTHR30008:SF0">
    <property type="entry name" value="EXODEOXYRIBONUCLEASE 7 LARGE SUBUNIT"/>
    <property type="match status" value="1"/>
</dbReference>
<dbReference type="Pfam" id="PF02601">
    <property type="entry name" value="Exonuc_VII_L"/>
    <property type="match status" value="1"/>
</dbReference>
<dbReference type="Pfam" id="PF13742">
    <property type="entry name" value="tRNA_anti_2"/>
    <property type="match status" value="1"/>
</dbReference>
<reference key="1">
    <citation type="journal article" date="2008" name="J. Bacteriol.">
        <title>Genome sequence of Lactobacillus helveticus: an organism distinguished by selective gene loss and IS element expansion.</title>
        <authorList>
            <person name="Callanan M."/>
            <person name="Kaleta P."/>
            <person name="O'Callaghan J."/>
            <person name="O'Sullivan O."/>
            <person name="Jordan K."/>
            <person name="McAuliffe O."/>
            <person name="Sangrador-Vegas A."/>
            <person name="Slattery L."/>
            <person name="Fitzgerald G.F."/>
            <person name="Beresford T."/>
            <person name="Ross R.P."/>
        </authorList>
    </citation>
    <scope>NUCLEOTIDE SEQUENCE [LARGE SCALE GENOMIC DNA]</scope>
    <source>
        <strain>DPC 4571</strain>
    </source>
</reference>
<accession>A8YVW9</accession>
<name>EX7L_LACH4</name>
<feature type="chain" id="PRO_1000072161" description="Exodeoxyribonuclease 7 large subunit">
    <location>
        <begin position="1"/>
        <end position="447"/>
    </location>
</feature>
<proteinExistence type="inferred from homology"/>
<keyword id="KW-0963">Cytoplasm</keyword>
<keyword id="KW-0269">Exonuclease</keyword>
<keyword id="KW-0378">Hydrolase</keyword>
<keyword id="KW-0540">Nuclease</keyword>
<organism>
    <name type="scientific">Lactobacillus helveticus (strain DPC 4571)</name>
    <dbReference type="NCBI Taxonomy" id="405566"/>
    <lineage>
        <taxon>Bacteria</taxon>
        <taxon>Bacillati</taxon>
        <taxon>Bacillota</taxon>
        <taxon>Bacilli</taxon>
        <taxon>Lactobacillales</taxon>
        <taxon>Lactobacillaceae</taxon>
        <taxon>Lactobacillus</taxon>
    </lineage>
</organism>
<comment type="function">
    <text evidence="1">Bidirectionally degrades single-stranded DNA into large acid-insoluble oligonucleotides, which are then degraded further into small acid-soluble oligonucleotides.</text>
</comment>
<comment type="catalytic activity">
    <reaction evidence="1">
        <text>Exonucleolytic cleavage in either 5'- to 3'- or 3'- to 5'-direction to yield nucleoside 5'-phosphates.</text>
        <dbReference type="EC" id="3.1.11.6"/>
    </reaction>
</comment>
<comment type="subunit">
    <text evidence="1">Heterooligomer composed of large and small subunits.</text>
</comment>
<comment type="subcellular location">
    <subcellularLocation>
        <location evidence="1">Cytoplasm</location>
    </subcellularLocation>
</comment>
<comment type="similarity">
    <text evidence="1">Belongs to the XseA family.</text>
</comment>
<sequence>MTDNKYLTVTDLNYYITQKFKNDPYLHKVFLQGELSNFRYRRNSHQYFSLKDEKSKINVVMFRSYFDKVKFKPEEGMKVYVVGYVSVYGPQGSYQFYAENMEPAGLGALYEQLKQLQAKLAKEGLFNPEHKRKLPRFPDKIAVVTSASGAVIHDIMVTANRRFPHAEIDLFPAQVQGDTAADSLVKAMRQIAAQGDEYDVMIIGRGGGSLEDLWSFNEEEVVRQVYAMPMPVISSVGHETDTTLCDLVADARAATPTAAAEYATPNLADELAGIHQLQSRLIAGMQNNINQKRDRLNRIKNSVIMREPTRLYDQQIQQVDLLKQRLQNSIQNKVNNSLQNYRLLKQRLLSVSPDKQIAGMEQQEKFLAKQLNDNMKHYLKNKRSDFSKIVQQLDDYSPLKTLERGFVYTTNEEGETVSSVDQIKKDDHLNLHFKDGEVTATVTEVKK</sequence>
<evidence type="ECO:0000255" key="1">
    <source>
        <dbReference type="HAMAP-Rule" id="MF_00378"/>
    </source>
</evidence>
<protein>
    <recommendedName>
        <fullName evidence="1">Exodeoxyribonuclease 7 large subunit</fullName>
        <ecNumber evidence="1">3.1.11.6</ecNumber>
    </recommendedName>
    <alternativeName>
        <fullName evidence="1">Exodeoxyribonuclease VII large subunit</fullName>
        <shortName evidence="1">Exonuclease VII large subunit</shortName>
    </alternativeName>
</protein>